<keyword id="KW-0520">NAD</keyword>
<keyword id="KW-0521">NADP</keyword>
<keyword id="KW-0560">Oxidoreductase</keyword>
<keyword id="KW-1185">Reference proteome</keyword>
<sequence length="353" mass="37896">MEKVKVIIMGLGAMGGGMADMLLKKQGVEIVGVVGRGKMLGTSMYDHISTPRGDREDVIVGAMEDVITEKAADVVLLCTDSFTRKAFDKIKFIVEKKINVISSAEEMAYPMAQEPELAKEIDRLAKENGVSVLGTGINPGLIMDLLVILMTGCCEEVHSILSRRVNSLSPFGPAVMEEQGIGITVEEFNKGVQEGTLAGHVGFHESIGMIADAIGWKLSAPITQSMEPIVTDVDRKSPYGFAKAGNVAGCAMKGFGYVDGELKIEMDHPQQIEPEQVGVQTGDYVIINGVPNINMVNSPEVPGGIGTIAMCVNMIPQIINARPGLHTMIDLPVPRAIMGDFRDLISEEAKIVK</sequence>
<reference key="1">
    <citation type="journal article" date="2010" name="BMC Genomics">
        <title>Clostridium sticklandii, a specialist in amino acid degradation:revisiting its metabolism through its genome sequence.</title>
        <authorList>
            <person name="Fonknechten N."/>
            <person name="Chaussonnerie S."/>
            <person name="Tricot S."/>
            <person name="Lajus A."/>
            <person name="Andreesen J.R."/>
            <person name="Perchat N."/>
            <person name="Pelletier E."/>
            <person name="Gouyvenoux M."/>
            <person name="Barbe V."/>
            <person name="Salanoubat M."/>
            <person name="Le Paslier D."/>
            <person name="Weissenbach J."/>
            <person name="Cohen G.N."/>
            <person name="Kreimeyer A."/>
        </authorList>
    </citation>
    <scope>NUCLEOTIDE SEQUENCE [LARGE SCALE GENOMIC DNA]</scope>
    <source>
        <strain>ATCC 12662 / DSM 519 / JCM 1433 / CCUG 9281 / NCIMB 10654 / HF</strain>
    </source>
</reference>
<reference key="2">
    <citation type="journal article" date="1973" name="J. Biol. Chem.">
        <title>2,4-diaminopentanoic acid C 4 dehydrogenase. Purification and properties of the protein.</title>
        <authorList>
            <person name="Somack R."/>
            <person name="Costilow R.N."/>
        </authorList>
    </citation>
    <scope>FUNCTION</scope>
    <scope>CATALYTIC ACTIVITY</scope>
    <scope>ACTIVITY REGULATION</scope>
    <scope>SUBUNIT</scope>
</reference>
<name>ORD_ACESD</name>
<dbReference type="EC" id="1.4.1.12" evidence="2"/>
<dbReference type="EMBL" id="FP565809">
    <property type="protein sequence ID" value="CBH21414.1"/>
    <property type="molecule type" value="Genomic_DNA"/>
</dbReference>
<dbReference type="SMR" id="E3PY99"/>
<dbReference type="STRING" id="1511.CLOST_1294"/>
<dbReference type="KEGG" id="cst:CLOST_1294"/>
<dbReference type="eggNOG" id="COG3804">
    <property type="taxonomic scope" value="Bacteria"/>
</dbReference>
<dbReference type="HOGENOM" id="CLU_050509_1_1_9"/>
<dbReference type="BioCyc" id="MetaCyc:DIAMINOPENDHST-MONOMER"/>
<dbReference type="Proteomes" id="UP000007041">
    <property type="component" value="Chromosome"/>
</dbReference>
<dbReference type="GO" id="GO:0047530">
    <property type="term" value="F:2,4-diaminopentanoate dehydrogenase activity"/>
    <property type="evidence" value="ECO:0000250"/>
    <property type="project" value="UniProtKB"/>
</dbReference>
<dbReference type="GO" id="GO:0000166">
    <property type="term" value="F:nucleotide binding"/>
    <property type="evidence" value="ECO:0007669"/>
    <property type="project" value="InterPro"/>
</dbReference>
<dbReference type="GO" id="GO:0006591">
    <property type="term" value="P:ornithine metabolic process"/>
    <property type="evidence" value="ECO:0000304"/>
    <property type="project" value="UniProtKB"/>
</dbReference>
<dbReference type="CDD" id="cd24146">
    <property type="entry name" value="nat-AmDH_N_like"/>
    <property type="match status" value="1"/>
</dbReference>
<dbReference type="Gene3D" id="3.40.50.720">
    <property type="entry name" value="NAD(P)-binding Rossmann-like Domain"/>
    <property type="match status" value="1"/>
</dbReference>
<dbReference type="InterPro" id="IPR045760">
    <property type="entry name" value="DAP_DH_C"/>
</dbReference>
<dbReference type="InterPro" id="IPR000683">
    <property type="entry name" value="Gfo/Idh/MocA-like_OxRdtase_N"/>
</dbReference>
<dbReference type="InterPro" id="IPR036291">
    <property type="entry name" value="NAD(P)-bd_dom_sf"/>
</dbReference>
<dbReference type="NCBIfam" id="NF040740">
    <property type="entry name" value="ornith_Ord"/>
    <property type="match status" value="1"/>
</dbReference>
<dbReference type="Pfam" id="PF19328">
    <property type="entry name" value="DAP_DH_C"/>
    <property type="match status" value="1"/>
</dbReference>
<dbReference type="Pfam" id="PF01408">
    <property type="entry name" value="GFO_IDH_MocA"/>
    <property type="match status" value="1"/>
</dbReference>
<dbReference type="SUPFAM" id="SSF51735">
    <property type="entry name" value="NAD(P)-binding Rossmann-fold domains"/>
    <property type="match status" value="1"/>
</dbReference>
<proteinExistence type="evidence at protein level"/>
<evidence type="ECO:0000250" key="1">
    <source>
        <dbReference type="UniProtKB" id="C1FW05"/>
    </source>
</evidence>
<evidence type="ECO:0000269" key="2">
    <source>
    </source>
</evidence>
<evidence type="ECO:0000303" key="3">
    <source>
    </source>
</evidence>
<evidence type="ECO:0000305" key="4"/>
<evidence type="ECO:0000305" key="5">
    <source>
    </source>
</evidence>
<evidence type="ECO:0000312" key="6">
    <source>
        <dbReference type="EMBL" id="CBH21414.1"/>
    </source>
</evidence>
<gene>
    <name evidence="1" type="primary">ord</name>
    <name evidence="6" type="ordered locus">CLOST_1294</name>
</gene>
<accession>E3PY99</accession>
<feature type="chain" id="PRO_0000438116" description="2,4-diaminopentanoate dehydrogenase">
    <location>
        <begin position="1"/>
        <end position="353"/>
    </location>
</feature>
<protein>
    <recommendedName>
        <fullName evidence="3">2,4-diaminopentanoate dehydrogenase</fullName>
        <shortName evidence="3">DAPDH</shortName>
        <ecNumber evidence="2">1.4.1.12</ecNumber>
    </recommendedName>
</protein>
<comment type="function">
    <text evidence="5">Involved in the ornithine fermentation pathway. Catalyzes the oxidative deamination of (2R,4S)-2,4-diaminopentanoate (DAP) to yield 2-amino-4-ketopentanoate (AKP).</text>
</comment>
<comment type="catalytic activity">
    <reaction evidence="2">
        <text>(2R,4S)-2,4-diaminopentanoate + NAD(+) + H2O = (2R)-2-amino-4-oxopentanoate + NH4(+) + NADH + H(+)</text>
        <dbReference type="Rhea" id="RHEA:24196"/>
        <dbReference type="ChEBI" id="CHEBI:15377"/>
        <dbReference type="ChEBI" id="CHEBI:15378"/>
        <dbReference type="ChEBI" id="CHEBI:28938"/>
        <dbReference type="ChEBI" id="CHEBI:57540"/>
        <dbReference type="ChEBI" id="CHEBI:57945"/>
        <dbReference type="ChEBI" id="CHEBI:58697"/>
        <dbReference type="ChEBI" id="CHEBI:134102"/>
        <dbReference type="EC" id="1.4.1.12"/>
    </reaction>
</comment>
<comment type="catalytic activity">
    <reaction evidence="2">
        <text>(2R,4S)-2,4-diaminopentanoate + NADP(+) + H2O = (2R)-2-amino-4-oxopentanoate + NH4(+) + NADPH + H(+)</text>
        <dbReference type="Rhea" id="RHEA:24192"/>
        <dbReference type="ChEBI" id="CHEBI:15377"/>
        <dbReference type="ChEBI" id="CHEBI:15378"/>
        <dbReference type="ChEBI" id="CHEBI:28938"/>
        <dbReference type="ChEBI" id="CHEBI:57783"/>
        <dbReference type="ChEBI" id="CHEBI:58349"/>
        <dbReference type="ChEBI" id="CHEBI:58697"/>
        <dbReference type="ChEBI" id="CHEBI:134102"/>
        <dbReference type="EC" id="1.4.1.12"/>
    </reaction>
</comment>
<comment type="activity regulation">
    <text evidence="2">Inhibited by p-chloromercuribenzoate, iodoacetate and N-ethylmaleimide.</text>
</comment>
<comment type="subunit">
    <text evidence="2">Homodimer.</text>
</comment>
<comment type="similarity">
    <text evidence="4">Belongs to the DapB family.</text>
</comment>
<organism>
    <name type="scientific">Acetoanaerobium sticklandii (strain ATCC 12662 / DSM 519 / JCM 1433 / CCUG 9281 / NCIMB 10654 / HF)</name>
    <name type="common">Clostridium sticklandii</name>
    <dbReference type="NCBI Taxonomy" id="499177"/>
    <lineage>
        <taxon>Bacteria</taxon>
        <taxon>Bacillati</taxon>
        <taxon>Bacillota</taxon>
        <taxon>Clostridia</taxon>
        <taxon>Peptostreptococcales</taxon>
        <taxon>Filifactoraceae</taxon>
        <taxon>Acetoanaerobium</taxon>
    </lineage>
</organism>